<gene>
    <name evidence="1" type="primary">argJ</name>
    <name type="ordered locus">BB4426</name>
</gene>
<sequence length="408" mass="42686">MAVNLQIPSESEILPVAGVEIGVAEAGIRKAGRRDLTVFRLAPGSAVAGVFTRNRFRAAPVQVCEAHLAQGGPIRALVVNTGNANAGTGAPGLKNAQDTCAALGKLLDVPAEQILPFSTGVILEPLPMDRLTAGLPAAVADLRADGWYGAAHGIMTTDTLPKIHSRRVDIGGKTVTITGISKGAGMIRPNMATMLGFLATDAGIAQPLLRQLAIELADVSFNRITVDGDTSTNDSFILIATGQAGVTVDSAGDAAYAALRDALAAAATDLAQKIVRDAEGATKFMTIRVEEAGNTEEALKVAYAVAHSPLVKTAFFASDPNLGRILAAIGYAGIDDLDVSRLRLWLGDVLVAVDGGRNPDYQEADGQRVMKQAEILVRIALGRGQVADTVYTCDFSHEYVTINADYRS</sequence>
<feature type="chain" id="PRO_0000002129" description="Arginine biosynthesis bifunctional protein ArgJ alpha chain" evidence="1">
    <location>
        <begin position="1"/>
        <end position="192"/>
    </location>
</feature>
<feature type="chain" id="PRO_0000002130" description="Arginine biosynthesis bifunctional protein ArgJ beta chain" evidence="1">
    <location>
        <begin position="193"/>
        <end position="408"/>
    </location>
</feature>
<feature type="active site" description="Nucleophile" evidence="1">
    <location>
        <position position="193"/>
    </location>
</feature>
<feature type="binding site" evidence="1">
    <location>
        <position position="156"/>
    </location>
    <ligand>
        <name>substrate</name>
    </ligand>
</feature>
<feature type="binding site" evidence="1">
    <location>
        <position position="182"/>
    </location>
    <ligand>
        <name>substrate</name>
    </ligand>
</feature>
<feature type="binding site" evidence="1">
    <location>
        <position position="193"/>
    </location>
    <ligand>
        <name>substrate</name>
    </ligand>
</feature>
<feature type="binding site" evidence="1">
    <location>
        <position position="279"/>
    </location>
    <ligand>
        <name>substrate</name>
    </ligand>
</feature>
<feature type="binding site" evidence="1">
    <location>
        <position position="403"/>
    </location>
    <ligand>
        <name>substrate</name>
    </ligand>
</feature>
<feature type="binding site" evidence="1">
    <location>
        <position position="408"/>
    </location>
    <ligand>
        <name>substrate</name>
    </ligand>
</feature>
<feature type="site" description="Involved in the stabilization of negative charge on the oxyanion by the formation of the oxyanion hole" evidence="1">
    <location>
        <position position="119"/>
    </location>
</feature>
<feature type="site" description="Involved in the stabilization of negative charge on the oxyanion by the formation of the oxyanion hole" evidence="1">
    <location>
        <position position="120"/>
    </location>
</feature>
<feature type="site" description="Cleavage; by autolysis" evidence="1">
    <location>
        <begin position="192"/>
        <end position="193"/>
    </location>
</feature>
<evidence type="ECO:0000255" key="1">
    <source>
        <dbReference type="HAMAP-Rule" id="MF_01106"/>
    </source>
</evidence>
<reference key="1">
    <citation type="journal article" date="2003" name="Nat. Genet.">
        <title>Comparative analysis of the genome sequences of Bordetella pertussis, Bordetella parapertussis and Bordetella bronchiseptica.</title>
        <authorList>
            <person name="Parkhill J."/>
            <person name="Sebaihia M."/>
            <person name="Preston A."/>
            <person name="Murphy L.D."/>
            <person name="Thomson N.R."/>
            <person name="Harris D.E."/>
            <person name="Holden M.T.G."/>
            <person name="Churcher C.M."/>
            <person name="Bentley S.D."/>
            <person name="Mungall K.L."/>
            <person name="Cerdeno-Tarraga A.-M."/>
            <person name="Temple L."/>
            <person name="James K.D."/>
            <person name="Harris B."/>
            <person name="Quail M.A."/>
            <person name="Achtman M."/>
            <person name="Atkin R."/>
            <person name="Baker S."/>
            <person name="Basham D."/>
            <person name="Bason N."/>
            <person name="Cherevach I."/>
            <person name="Chillingworth T."/>
            <person name="Collins M."/>
            <person name="Cronin A."/>
            <person name="Davis P."/>
            <person name="Doggett J."/>
            <person name="Feltwell T."/>
            <person name="Goble A."/>
            <person name="Hamlin N."/>
            <person name="Hauser H."/>
            <person name="Holroyd S."/>
            <person name="Jagels K."/>
            <person name="Leather S."/>
            <person name="Moule S."/>
            <person name="Norberczak H."/>
            <person name="O'Neil S."/>
            <person name="Ormond D."/>
            <person name="Price C."/>
            <person name="Rabbinowitsch E."/>
            <person name="Rutter S."/>
            <person name="Sanders M."/>
            <person name="Saunders D."/>
            <person name="Seeger K."/>
            <person name="Sharp S."/>
            <person name="Simmonds M."/>
            <person name="Skelton J."/>
            <person name="Squares R."/>
            <person name="Squares S."/>
            <person name="Stevens K."/>
            <person name="Unwin L."/>
            <person name="Whitehead S."/>
            <person name="Barrell B.G."/>
            <person name="Maskell D.J."/>
        </authorList>
    </citation>
    <scope>NUCLEOTIDE SEQUENCE [LARGE SCALE GENOMIC DNA]</scope>
    <source>
        <strain>ATCC BAA-588 / NCTC 13252 / RB50</strain>
    </source>
</reference>
<protein>
    <recommendedName>
        <fullName evidence="1">Arginine biosynthesis bifunctional protein ArgJ</fullName>
    </recommendedName>
    <domain>
        <recommendedName>
            <fullName evidence="1">Glutamate N-acetyltransferase</fullName>
            <ecNumber evidence="1">2.3.1.35</ecNumber>
        </recommendedName>
        <alternativeName>
            <fullName evidence="1">Ornithine acetyltransferase</fullName>
            <shortName evidence="1">OATase</shortName>
        </alternativeName>
        <alternativeName>
            <fullName evidence="1">Ornithine transacetylase</fullName>
        </alternativeName>
    </domain>
    <domain>
        <recommendedName>
            <fullName evidence="1">Amino-acid acetyltransferase</fullName>
            <ecNumber evidence="1">2.3.1.1</ecNumber>
        </recommendedName>
        <alternativeName>
            <fullName evidence="1">N-acetylglutamate synthase</fullName>
            <shortName evidence="1">AGSase</shortName>
        </alternativeName>
    </domain>
    <component>
        <recommendedName>
            <fullName evidence="1">Arginine biosynthesis bifunctional protein ArgJ alpha chain</fullName>
        </recommendedName>
    </component>
    <component>
        <recommendedName>
            <fullName evidence="1">Arginine biosynthesis bifunctional protein ArgJ beta chain</fullName>
        </recommendedName>
    </component>
</protein>
<organism>
    <name type="scientific">Bordetella bronchiseptica (strain ATCC BAA-588 / NCTC 13252 / RB50)</name>
    <name type="common">Alcaligenes bronchisepticus</name>
    <dbReference type="NCBI Taxonomy" id="257310"/>
    <lineage>
        <taxon>Bacteria</taxon>
        <taxon>Pseudomonadati</taxon>
        <taxon>Pseudomonadota</taxon>
        <taxon>Betaproteobacteria</taxon>
        <taxon>Burkholderiales</taxon>
        <taxon>Alcaligenaceae</taxon>
        <taxon>Bordetella</taxon>
    </lineage>
</organism>
<proteinExistence type="inferred from homology"/>
<comment type="function">
    <text evidence="1">Catalyzes two activities which are involved in the cyclic version of arginine biosynthesis: the synthesis of N-acetylglutamate from glutamate and acetyl-CoA as the acetyl donor, and of ornithine by transacetylation between N(2)-acetylornithine and glutamate.</text>
</comment>
<comment type="catalytic activity">
    <reaction evidence="1">
        <text>N(2)-acetyl-L-ornithine + L-glutamate = N-acetyl-L-glutamate + L-ornithine</text>
        <dbReference type="Rhea" id="RHEA:15349"/>
        <dbReference type="ChEBI" id="CHEBI:29985"/>
        <dbReference type="ChEBI" id="CHEBI:44337"/>
        <dbReference type="ChEBI" id="CHEBI:46911"/>
        <dbReference type="ChEBI" id="CHEBI:57805"/>
        <dbReference type="EC" id="2.3.1.35"/>
    </reaction>
</comment>
<comment type="catalytic activity">
    <reaction evidence="1">
        <text>L-glutamate + acetyl-CoA = N-acetyl-L-glutamate + CoA + H(+)</text>
        <dbReference type="Rhea" id="RHEA:24292"/>
        <dbReference type="ChEBI" id="CHEBI:15378"/>
        <dbReference type="ChEBI" id="CHEBI:29985"/>
        <dbReference type="ChEBI" id="CHEBI:44337"/>
        <dbReference type="ChEBI" id="CHEBI:57287"/>
        <dbReference type="ChEBI" id="CHEBI:57288"/>
        <dbReference type="EC" id="2.3.1.1"/>
    </reaction>
</comment>
<comment type="pathway">
    <text evidence="1">Amino-acid biosynthesis; L-arginine biosynthesis; L-ornithine and N-acetyl-L-glutamate from L-glutamate and N(2)-acetyl-L-ornithine (cyclic): step 1/1.</text>
</comment>
<comment type="pathway">
    <text evidence="1">Amino-acid biosynthesis; L-arginine biosynthesis; N(2)-acetyl-L-ornithine from L-glutamate: step 1/4.</text>
</comment>
<comment type="subunit">
    <text evidence="1">Heterotetramer of two alpha and two beta chains.</text>
</comment>
<comment type="subcellular location">
    <subcellularLocation>
        <location evidence="1">Cytoplasm</location>
    </subcellularLocation>
</comment>
<comment type="similarity">
    <text evidence="1">Belongs to the ArgJ family.</text>
</comment>
<accession>Q7WF54</accession>
<dbReference type="EC" id="2.3.1.35" evidence="1"/>
<dbReference type="EC" id="2.3.1.1" evidence="1"/>
<dbReference type="EMBL" id="BX640450">
    <property type="protein sequence ID" value="CAE34789.1"/>
    <property type="molecule type" value="Genomic_DNA"/>
</dbReference>
<dbReference type="RefSeq" id="WP_003815023.1">
    <property type="nucleotide sequence ID" value="NC_002927.3"/>
</dbReference>
<dbReference type="SMR" id="Q7WF54"/>
<dbReference type="MEROPS" id="T05.001"/>
<dbReference type="GeneID" id="93205752"/>
<dbReference type="KEGG" id="bbr:BB4426"/>
<dbReference type="eggNOG" id="COG1364">
    <property type="taxonomic scope" value="Bacteria"/>
</dbReference>
<dbReference type="HOGENOM" id="CLU_027172_1_0_4"/>
<dbReference type="UniPathway" id="UPA00068">
    <property type="reaction ID" value="UER00106"/>
</dbReference>
<dbReference type="UniPathway" id="UPA00068">
    <property type="reaction ID" value="UER00111"/>
</dbReference>
<dbReference type="Proteomes" id="UP000001027">
    <property type="component" value="Chromosome"/>
</dbReference>
<dbReference type="GO" id="GO:0005737">
    <property type="term" value="C:cytoplasm"/>
    <property type="evidence" value="ECO:0007669"/>
    <property type="project" value="UniProtKB-SubCell"/>
</dbReference>
<dbReference type="GO" id="GO:0004358">
    <property type="term" value="F:glutamate N-acetyltransferase activity"/>
    <property type="evidence" value="ECO:0007669"/>
    <property type="project" value="UniProtKB-UniRule"/>
</dbReference>
<dbReference type="GO" id="GO:0004042">
    <property type="term" value="F:L-glutamate N-acetyltransferase activity"/>
    <property type="evidence" value="ECO:0007669"/>
    <property type="project" value="UniProtKB-UniRule"/>
</dbReference>
<dbReference type="GO" id="GO:0006526">
    <property type="term" value="P:L-arginine biosynthetic process"/>
    <property type="evidence" value="ECO:0007669"/>
    <property type="project" value="UniProtKB-UniRule"/>
</dbReference>
<dbReference type="GO" id="GO:0006592">
    <property type="term" value="P:ornithine biosynthetic process"/>
    <property type="evidence" value="ECO:0007669"/>
    <property type="project" value="TreeGrafter"/>
</dbReference>
<dbReference type="CDD" id="cd02152">
    <property type="entry name" value="OAT"/>
    <property type="match status" value="1"/>
</dbReference>
<dbReference type="FunFam" id="3.60.70.12:FF:000001">
    <property type="entry name" value="Arginine biosynthesis bifunctional protein ArgJ, chloroplastic"/>
    <property type="match status" value="1"/>
</dbReference>
<dbReference type="Gene3D" id="3.30.2330.10">
    <property type="entry name" value="arginine biosynthesis bifunctional protein suprefamily"/>
    <property type="match status" value="1"/>
</dbReference>
<dbReference type="Gene3D" id="3.10.20.340">
    <property type="entry name" value="ArgJ beta chain, C-terminal domain"/>
    <property type="match status" value="1"/>
</dbReference>
<dbReference type="Gene3D" id="3.60.70.12">
    <property type="entry name" value="L-amino peptidase D-ALA esterase/amidase"/>
    <property type="match status" value="1"/>
</dbReference>
<dbReference type="HAMAP" id="MF_01106">
    <property type="entry name" value="ArgJ"/>
    <property type="match status" value="1"/>
</dbReference>
<dbReference type="InterPro" id="IPR002813">
    <property type="entry name" value="Arg_biosynth_ArgJ"/>
</dbReference>
<dbReference type="InterPro" id="IPR016117">
    <property type="entry name" value="ArgJ-like_dom_sf"/>
</dbReference>
<dbReference type="InterPro" id="IPR042195">
    <property type="entry name" value="ArgJ_beta_C"/>
</dbReference>
<dbReference type="NCBIfam" id="TIGR00120">
    <property type="entry name" value="ArgJ"/>
    <property type="match status" value="1"/>
</dbReference>
<dbReference type="NCBIfam" id="NF003802">
    <property type="entry name" value="PRK05388.1"/>
    <property type="match status" value="1"/>
</dbReference>
<dbReference type="PANTHER" id="PTHR23100">
    <property type="entry name" value="ARGININE BIOSYNTHESIS BIFUNCTIONAL PROTEIN ARGJ"/>
    <property type="match status" value="1"/>
</dbReference>
<dbReference type="PANTHER" id="PTHR23100:SF0">
    <property type="entry name" value="ARGININE BIOSYNTHESIS BIFUNCTIONAL PROTEIN ARGJ, MITOCHONDRIAL"/>
    <property type="match status" value="1"/>
</dbReference>
<dbReference type="Pfam" id="PF01960">
    <property type="entry name" value="ArgJ"/>
    <property type="match status" value="1"/>
</dbReference>
<dbReference type="SUPFAM" id="SSF56266">
    <property type="entry name" value="DmpA/ArgJ-like"/>
    <property type="match status" value="1"/>
</dbReference>
<name>ARGJ_BORBR</name>
<keyword id="KW-0012">Acyltransferase</keyword>
<keyword id="KW-0028">Amino-acid biosynthesis</keyword>
<keyword id="KW-0055">Arginine biosynthesis</keyword>
<keyword id="KW-0068">Autocatalytic cleavage</keyword>
<keyword id="KW-0963">Cytoplasm</keyword>
<keyword id="KW-0511">Multifunctional enzyme</keyword>
<keyword id="KW-0808">Transferase</keyword>